<organism>
    <name type="scientific">Simian retrovirus SRV-1</name>
    <dbReference type="NCBI Taxonomy" id="11942"/>
    <lineage>
        <taxon>Viruses</taxon>
        <taxon>Riboviria</taxon>
        <taxon>Pararnavirae</taxon>
        <taxon>Artverviricota</taxon>
        <taxon>Revtraviricetes</taxon>
        <taxon>Ortervirales</taxon>
        <taxon>Retroviridae</taxon>
        <taxon>Orthoretrovirinae</taxon>
        <taxon>Betaretrovirus</taxon>
        <taxon>Mason-Pfizer monkey virus</taxon>
    </lineage>
</organism>
<keyword id="KW-0002">3D-structure</keyword>
<keyword id="KW-0167">Capsid protein</keyword>
<keyword id="KW-0165">Cleavage on pair of basic residues</keyword>
<keyword id="KW-0175">Coiled coil</keyword>
<keyword id="KW-0945">Host-virus interaction</keyword>
<keyword id="KW-0449">Lipoprotein</keyword>
<keyword id="KW-0479">Metal-binding</keyword>
<keyword id="KW-0519">Myristate</keyword>
<keyword id="KW-0597">Phosphoprotein</keyword>
<keyword id="KW-0677">Repeat</keyword>
<keyword id="KW-0688">Ribosomal frameshifting</keyword>
<keyword id="KW-1198">Viral budding</keyword>
<keyword id="KW-1187">Viral budding via the host ESCRT complexes</keyword>
<keyword id="KW-0468">Viral matrix protein</keyword>
<keyword id="KW-0543">Viral nucleoprotein</keyword>
<keyword id="KW-1188">Viral release from host cell</keyword>
<keyword id="KW-0946">Virion</keyword>
<keyword id="KW-0862">Zinc</keyword>
<keyword id="KW-0863">Zinc-finger</keyword>
<accession>P04022</accession>
<comment type="function">
    <molecule>Matrix protein p10</molecule>
    <text evidence="6">Matrix protein.</text>
</comment>
<comment type="function">
    <molecule>Nucleocapsid protein p14</molecule>
    <text evidence="6">Nucleocapsid protein.</text>
</comment>
<comment type="function">
    <molecule>Capsid protein p27</molecule>
    <text evidence="6">Capsid protein.</text>
</comment>
<comment type="subcellular location">
    <molecule>Matrix protein p10</molecule>
    <subcellularLocation>
        <location evidence="6">Virion</location>
    </subcellularLocation>
</comment>
<comment type="subcellular location">
    <molecule>Capsid protein p27</molecule>
    <subcellularLocation>
        <location evidence="6">Virion</location>
    </subcellularLocation>
</comment>
<comment type="subcellular location">
    <molecule>Nucleocapsid protein p14</molecule>
    <subcellularLocation>
        <location evidence="6">Virion</location>
    </subcellularLocation>
</comment>
<comment type="alternative products">
    <event type="ribosomal frameshifting"/>
    <isoform>
        <id>P04022-1</id>
        <name>Gag polyprotein</name>
        <sequence type="displayed"/>
    </isoform>
    <isoform>
        <id>P04024-1</id>
        <name>Gag-Pro polyprotein</name>
        <sequence type="external"/>
    </isoform>
    <isoform>
        <id>P04025-1</id>
        <name>Gag-Pro-Pol polyprotein</name>
        <sequence type="external"/>
    </isoform>
</comment>
<comment type="domain">
    <molecule>Gag polyprotein</molecule>
    <text evidence="1">Late-budding domains (L domains) are short sequence motifs essential for viral particle release. They can occur individually or in close proximity within structural proteins. They interacts with sorting cellular proteins of the multivesicular body (MVB) pathway. Most of these proteins are class E vacuolar protein sorting factors belonging to ESCRT-I, ESCRT-II or ESCRT-III complexes. Phosphorylated protein pp24 and phosphorylated protein pp18 contains two L domains: a PTAP/PSAP motif which interacts with the UEV domain of TSG101, and a PPXY motif which binds to the WW domains of the ubiquitin ligase NEDD4. Both motifs contribute to viral release. The PSAP motif acts as an additional L domain and promotes the efficient release of the virions but requires an intact PPPY motif to perform its function.</text>
</comment>
<comment type="PTM">
    <molecule>Gag polyprotein</molecule>
    <text evidence="2">Myristoylated. Myristoylation of the matrix (MA) domain mediates the transport and binding of Gag polyproteins to the host plasma membrane and is required for the assembly of viral particles.</text>
</comment>
<comment type="PTM">
    <molecule>Gag polyprotein</molecule>
    <text evidence="1">Specific enzymatic cleavages in vivo yield mature proteins.</text>
</comment>
<comment type="miscellaneous">
    <molecule>Isoform Gag polyprotein</molecule>
    <text evidence="7">Produced by conventional translation.</text>
</comment>
<reference key="1">
    <citation type="journal article" date="1986" name="Science">
        <title>Nucleotide sequence of SRV-1, a type D simian acquired immune deficiency syndrome retrovirus.</title>
        <authorList>
            <person name="Power M.D."/>
            <person name="Marx P.A."/>
            <person name="Bryant M.L."/>
            <person name="Gardner M.B."/>
            <person name="Barr P.J."/>
            <person name="Luciw P.A."/>
        </authorList>
    </citation>
    <scope>NUCLEOTIDE SEQUENCE [GENOMIC RNA]</scope>
</reference>
<reference key="2">
    <citation type="journal article" date="2013" name="Biomed. Res. Int.">
        <title>A genome-wide analysis of RNA pseudoknots that stimulate efficient -1 ribosomal frameshifting or readthrough in animal viruses.</title>
        <authorList>
            <person name="Huang X."/>
            <person name="Cheng Q."/>
            <person name="Du Z."/>
        </authorList>
    </citation>
    <scope>RIBOSOMAL FRAMESHIFT</scope>
</reference>
<protein>
    <recommendedName>
        <fullName>Gag polyprotein</fullName>
    </recommendedName>
    <alternativeName>
        <fullName>Core polyprotein</fullName>
    </alternativeName>
    <component>
        <recommendedName>
            <fullName>Matrix protein p10</fullName>
        </recommendedName>
    </component>
    <component>
        <recommendedName>
            <fullName>Phosphorylated protein pp24</fullName>
        </recommendedName>
    </component>
    <component>
        <recommendedName>
            <fullName>Phosphorylated protein pp18</fullName>
        </recommendedName>
    </component>
    <component>
        <recommendedName>
            <fullName>p12</fullName>
        </recommendedName>
    </component>
    <component>
        <recommendedName>
            <fullName>Capsid protein p27</fullName>
        </recommendedName>
    </component>
    <component>
        <recommendedName>
            <fullName>Nucleocapsid protein p14</fullName>
        </recommendedName>
    </component>
    <component>
        <recommendedName>
            <fullName>p4</fullName>
        </recommendedName>
    </component>
</protein>
<name>GAG_SRV1</name>
<proteinExistence type="evidence at protein level"/>
<sequence length="658" mass="73195">MGQELSQHERYVEQLKQALKTRGVKVKYADLLKFFDFVKDTCPWFPQEGTIDIKRWRRVGDCFQDYYNTFGPEKVPVTAFSYWNLIKELIDKKEVNPQVMAAVAQTEEILKTSSHTELTTKPSQNPDLDLISLDSDDEGAKGSSLKDKNLSCTKKPKRFPVLLTAQTSADPEDPNPSEVDWDGLEDEAAKYHNPDWPPFLTRPPPYNKATPSAPTVMAVVNPKEELKEKIAQLEEQIKLEELHQALISKLQKLKTGNETVTSPETAGGFSRTPHWPGQHIPKGKCCASREKEEQTPKDIFPVTETVDGQGQAWRHHNGFDFTVIKELKTAASQYGATAPYTLAIVESVADNWLTPTDWNTLVRAVLSGGDHLLWKSEFFENCRETAKRNQQAGNGWDFDMLTGSGNYSSTDAQMQYDPGLFAQIQAAATKAWRKLPVKGDPGASLTGVKQGPDEPFADFVHRLITTAGRIFGSAEAGVDYVKQLAYENANPACQAAIRPYRKKTDLTGYIRLCSDIGPSYQQGLAMAAAFSGQTVKDFLNNKNKEKGGCCFKCGRKGHFAKNCHEHIHNNSETKAPGLCPRCKRGKHWANECKSKTDSQGNPLPPHQGNGLRGQPQAPKQAYGAVSFVPANKNNPFQSLPEPPQEVQDWTSVPPPTQY</sequence>
<dbReference type="EMBL" id="M11841">
    <property type="protein sequence ID" value="AAA47730.1"/>
    <property type="molecule type" value="Genomic_RNA"/>
</dbReference>
<dbReference type="PDB" id="2F76">
    <property type="method" value="NMR"/>
    <property type="chains" value="X=2-99"/>
</dbReference>
<dbReference type="PDB" id="2F77">
    <property type="method" value="NMR"/>
    <property type="chains" value="X=2-99"/>
</dbReference>
<dbReference type="PDBsum" id="2F76"/>
<dbReference type="PDBsum" id="2F77"/>
<dbReference type="BMRB" id="P04022"/>
<dbReference type="SMR" id="P04022"/>
<dbReference type="Proteomes" id="UP000007228">
    <property type="component" value="Genome"/>
</dbReference>
<dbReference type="GO" id="GO:0019013">
    <property type="term" value="C:viral nucleocapsid"/>
    <property type="evidence" value="ECO:0007669"/>
    <property type="project" value="UniProtKB-KW"/>
</dbReference>
<dbReference type="GO" id="GO:0003676">
    <property type="term" value="F:nucleic acid binding"/>
    <property type="evidence" value="ECO:0007669"/>
    <property type="project" value="InterPro"/>
</dbReference>
<dbReference type="GO" id="GO:0039660">
    <property type="term" value="F:structural constituent of virion"/>
    <property type="evidence" value="ECO:0007669"/>
    <property type="project" value="UniProtKB-KW"/>
</dbReference>
<dbReference type="GO" id="GO:0008270">
    <property type="term" value="F:zinc ion binding"/>
    <property type="evidence" value="ECO:0007669"/>
    <property type="project" value="UniProtKB-KW"/>
</dbReference>
<dbReference type="GO" id="GO:0039702">
    <property type="term" value="P:viral budding via host ESCRT complex"/>
    <property type="evidence" value="ECO:0007669"/>
    <property type="project" value="UniProtKB-KW"/>
</dbReference>
<dbReference type="GO" id="GO:0075523">
    <property type="term" value="P:viral translational frameshifting"/>
    <property type="evidence" value="ECO:0007669"/>
    <property type="project" value="UniProtKB-KW"/>
</dbReference>
<dbReference type="FunFam" id="1.10.150.490:FF:000002">
    <property type="entry name" value="Gag polyprotein"/>
    <property type="match status" value="1"/>
</dbReference>
<dbReference type="FunFam" id="4.10.60.10:FF:000036">
    <property type="entry name" value="Gag polyprotein"/>
    <property type="match status" value="1"/>
</dbReference>
<dbReference type="Gene3D" id="1.10.1200.30">
    <property type="match status" value="1"/>
</dbReference>
<dbReference type="Gene3D" id="1.10.375.10">
    <property type="entry name" value="Human Immunodeficiency Virus Type 1 Capsid Protein"/>
    <property type="match status" value="1"/>
</dbReference>
<dbReference type="Gene3D" id="1.10.150.490">
    <property type="entry name" value="Retroviral GAG p10 protein"/>
    <property type="match status" value="1"/>
</dbReference>
<dbReference type="Gene3D" id="4.10.60.10">
    <property type="entry name" value="Zinc finger, CCHC-type"/>
    <property type="match status" value="1"/>
</dbReference>
<dbReference type="InterPro" id="IPR003322">
    <property type="entry name" value="B_retro_matrix"/>
</dbReference>
<dbReference type="InterPro" id="IPR038124">
    <property type="entry name" value="B_retro_matrix_sf"/>
</dbReference>
<dbReference type="InterPro" id="IPR045345">
    <property type="entry name" value="Gag_p24_C"/>
</dbReference>
<dbReference type="InterPro" id="IPR050195">
    <property type="entry name" value="Primate_lentivir_Gag_pol-like"/>
</dbReference>
<dbReference type="InterPro" id="IPR008916">
    <property type="entry name" value="Retrov_capsid_C"/>
</dbReference>
<dbReference type="InterPro" id="IPR008919">
    <property type="entry name" value="Retrov_capsid_N"/>
</dbReference>
<dbReference type="InterPro" id="IPR010999">
    <property type="entry name" value="Retrovr_matrix"/>
</dbReference>
<dbReference type="InterPro" id="IPR001878">
    <property type="entry name" value="Znf_CCHC"/>
</dbReference>
<dbReference type="InterPro" id="IPR036875">
    <property type="entry name" value="Znf_CCHC_sf"/>
</dbReference>
<dbReference type="PANTHER" id="PTHR40389">
    <property type="entry name" value="ENDOGENOUS RETROVIRUS GROUP K MEMBER 24 GAG POLYPROTEIN-RELATED"/>
    <property type="match status" value="1"/>
</dbReference>
<dbReference type="PANTHER" id="PTHR40389:SF3">
    <property type="entry name" value="IGE-BINDING PROTEIN"/>
    <property type="match status" value="1"/>
</dbReference>
<dbReference type="Pfam" id="PF02337">
    <property type="entry name" value="Gag_p10"/>
    <property type="match status" value="1"/>
</dbReference>
<dbReference type="Pfam" id="PF00607">
    <property type="entry name" value="Gag_p24"/>
    <property type="match status" value="1"/>
</dbReference>
<dbReference type="Pfam" id="PF19317">
    <property type="entry name" value="Gag_p24_C"/>
    <property type="match status" value="1"/>
</dbReference>
<dbReference type="Pfam" id="PF14787">
    <property type="entry name" value="zf-CCHC_5"/>
    <property type="match status" value="1"/>
</dbReference>
<dbReference type="SMART" id="SM00343">
    <property type="entry name" value="ZnF_C2HC"/>
    <property type="match status" value="2"/>
</dbReference>
<dbReference type="SUPFAM" id="SSF47836">
    <property type="entry name" value="Retroviral matrix proteins"/>
    <property type="match status" value="1"/>
</dbReference>
<dbReference type="SUPFAM" id="SSF47353">
    <property type="entry name" value="Retrovirus capsid dimerization domain-like"/>
    <property type="match status" value="1"/>
</dbReference>
<dbReference type="SUPFAM" id="SSF47943">
    <property type="entry name" value="Retrovirus capsid protein, N-terminal core domain"/>
    <property type="match status" value="1"/>
</dbReference>
<dbReference type="SUPFAM" id="SSF57756">
    <property type="entry name" value="Retrovirus zinc finger-like domains"/>
    <property type="match status" value="1"/>
</dbReference>
<dbReference type="PROSITE" id="PS50158">
    <property type="entry name" value="ZF_CCHC"/>
    <property type="match status" value="1"/>
</dbReference>
<evidence type="ECO:0000250" key="1">
    <source>
        <dbReference type="UniProtKB" id="P07567"/>
    </source>
</evidence>
<evidence type="ECO:0000250" key="2">
    <source>
        <dbReference type="UniProtKB" id="P10258"/>
    </source>
</evidence>
<evidence type="ECO:0000255" key="3"/>
<evidence type="ECO:0000255" key="4">
    <source>
        <dbReference type="PROSITE-ProRule" id="PRU00047"/>
    </source>
</evidence>
<evidence type="ECO:0000256" key="5">
    <source>
        <dbReference type="SAM" id="MobiDB-lite"/>
    </source>
</evidence>
<evidence type="ECO:0000305" key="6"/>
<evidence type="ECO:0000305" key="7">
    <source>
    </source>
</evidence>
<gene>
    <name type="primary">gag</name>
</gene>
<feature type="initiator methionine" description="Removed; by host" evidence="1">
    <location>
        <position position="1"/>
    </location>
</feature>
<feature type="chain" id="PRO_0000443126" description="Gag polyprotein" evidence="1">
    <location>
        <begin position="2"/>
        <end position="658"/>
    </location>
</feature>
<feature type="chain" id="PRO_0000040964" description="Matrix protein p10" evidence="1">
    <location>
        <begin position="2"/>
        <end position="100"/>
    </location>
</feature>
<feature type="chain" id="PRO_0000040966" description="Phosphorylated protein pp24" evidence="1">
    <location>
        <begin position="101"/>
        <end position="217"/>
    </location>
</feature>
<feature type="propeptide" id="PRO_0000040965" evidence="6">
    <location>
        <begin position="101"/>
        <end position="162"/>
    </location>
</feature>
<feature type="chain" id="PRO_0000443127" description="Phosphorylated protein pp18" evidence="1">
    <location>
        <begin position="163"/>
        <end position="217"/>
    </location>
</feature>
<feature type="chain" id="PRO_0000040967" description="p12" evidence="1">
    <location>
        <begin position="218"/>
        <end position="300"/>
    </location>
</feature>
<feature type="chain" id="PRO_0000040968" description="Capsid protein p27" evidence="1">
    <location>
        <begin position="301"/>
        <end position="526"/>
    </location>
</feature>
<feature type="chain" id="PRO_0000040969" description="Nucleocapsid protein p14" evidence="1">
    <location>
        <begin position="527"/>
        <end position="622"/>
    </location>
</feature>
<feature type="chain" id="PRO_0000040970" description="p4" evidence="1">
    <location>
        <begin position="623"/>
        <end position="658"/>
    </location>
</feature>
<feature type="zinc finger region" description="CCHC-type 1" evidence="4">
    <location>
        <begin position="548"/>
        <end position="565"/>
    </location>
</feature>
<feature type="zinc finger region" description="CCHC-type 2" evidence="4">
    <location>
        <begin position="577"/>
        <end position="594"/>
    </location>
</feature>
<feature type="region of interest" description="Disordered" evidence="5">
    <location>
        <begin position="113"/>
        <end position="149"/>
    </location>
</feature>
<feature type="region of interest" description="Disordered" evidence="5">
    <location>
        <begin position="258"/>
        <end position="281"/>
    </location>
</feature>
<feature type="region of interest" description="Disordered" evidence="5">
    <location>
        <begin position="593"/>
        <end position="658"/>
    </location>
</feature>
<feature type="coiled-coil region" evidence="3">
    <location>
        <begin position="217"/>
        <end position="258"/>
    </location>
</feature>
<feature type="short sequence motif" description="PPXY motif" evidence="1">
    <location>
        <begin position="203"/>
        <end position="206"/>
    </location>
</feature>
<feature type="short sequence motif" description="PTAP/PSAP motif" evidence="1">
    <location>
        <begin position="211"/>
        <end position="214"/>
    </location>
</feature>
<feature type="compositionally biased region" description="Polar residues" evidence="5">
    <location>
        <begin position="113"/>
        <end position="126"/>
    </location>
</feature>
<feature type="compositionally biased region" description="Basic and acidic residues" evidence="5">
    <location>
        <begin position="138"/>
        <end position="149"/>
    </location>
</feature>
<feature type="site" description="Cleavage; by viral protease" evidence="1">
    <location>
        <begin position="100"/>
        <end position="101"/>
    </location>
</feature>
<feature type="site" description="Cleavage; by viral protease" evidence="1">
    <location>
        <begin position="163"/>
        <end position="164"/>
    </location>
</feature>
<feature type="site" description="Cleavage; by viral protease" evidence="1">
    <location>
        <begin position="217"/>
        <end position="218"/>
    </location>
</feature>
<feature type="site" description="Cleavage; by viral protease" evidence="1">
    <location>
        <begin position="300"/>
        <end position="301"/>
    </location>
</feature>
<feature type="site" description="Cleavage; by viral protease" evidence="1">
    <location>
        <begin position="526"/>
        <end position="527"/>
    </location>
</feature>
<feature type="site" description="Cleavage; by viral protease" evidence="1">
    <location>
        <begin position="622"/>
        <end position="623"/>
    </location>
</feature>
<feature type="lipid moiety-binding region" description="N-myristoyl glycine; by host" evidence="2">
    <location>
        <position position="2"/>
    </location>
</feature>
<organismHost>
    <name type="scientific">Macaca mulatta</name>
    <name type="common">Rhesus macaque</name>
    <dbReference type="NCBI Taxonomy" id="9544"/>
</organismHost>